<protein>
    <recommendedName>
        <fullName>UPF0053 inner membrane protein YoaE</fullName>
    </recommendedName>
</protein>
<accession>P0AEC2</accession>
<accession>P76262</accession>
<name>YOAE_ECO57</name>
<comment type="subcellular location">
    <subcellularLocation>
        <location evidence="1">Cell inner membrane</location>
        <topology evidence="1">Multi-pass membrane protein</topology>
    </subcellularLocation>
</comment>
<comment type="similarity">
    <text evidence="4">Belongs to the UPF0053 family.</text>
</comment>
<evidence type="ECO:0000250" key="1"/>
<evidence type="ECO:0000255" key="2"/>
<evidence type="ECO:0000255" key="3">
    <source>
        <dbReference type="PROSITE-ProRule" id="PRU00703"/>
    </source>
</evidence>
<evidence type="ECO:0000305" key="4"/>
<proteinExistence type="inferred from homology"/>
<reference key="1">
    <citation type="journal article" date="2001" name="Nature">
        <title>Genome sequence of enterohaemorrhagic Escherichia coli O157:H7.</title>
        <authorList>
            <person name="Perna N.T."/>
            <person name="Plunkett G. III"/>
            <person name="Burland V."/>
            <person name="Mau B."/>
            <person name="Glasner J.D."/>
            <person name="Rose D.J."/>
            <person name="Mayhew G.F."/>
            <person name="Evans P.S."/>
            <person name="Gregor J."/>
            <person name="Kirkpatrick H.A."/>
            <person name="Posfai G."/>
            <person name="Hackett J."/>
            <person name="Klink S."/>
            <person name="Boutin A."/>
            <person name="Shao Y."/>
            <person name="Miller L."/>
            <person name="Grotbeck E.J."/>
            <person name="Davis N.W."/>
            <person name="Lim A."/>
            <person name="Dimalanta E.T."/>
            <person name="Potamousis K."/>
            <person name="Apodaca J."/>
            <person name="Anantharaman T.S."/>
            <person name="Lin J."/>
            <person name="Yen G."/>
            <person name="Schwartz D.C."/>
            <person name="Welch R.A."/>
            <person name="Blattner F.R."/>
        </authorList>
    </citation>
    <scope>NUCLEOTIDE SEQUENCE [LARGE SCALE GENOMIC DNA]</scope>
    <source>
        <strain>O157:H7 / EDL933 / ATCC 700927 / EHEC</strain>
    </source>
</reference>
<reference key="2">
    <citation type="journal article" date="2001" name="DNA Res.">
        <title>Complete genome sequence of enterohemorrhagic Escherichia coli O157:H7 and genomic comparison with a laboratory strain K-12.</title>
        <authorList>
            <person name="Hayashi T."/>
            <person name="Makino K."/>
            <person name="Ohnishi M."/>
            <person name="Kurokawa K."/>
            <person name="Ishii K."/>
            <person name="Yokoyama K."/>
            <person name="Han C.-G."/>
            <person name="Ohtsubo E."/>
            <person name="Nakayama K."/>
            <person name="Murata T."/>
            <person name="Tanaka M."/>
            <person name="Tobe T."/>
            <person name="Iida T."/>
            <person name="Takami H."/>
            <person name="Honda T."/>
            <person name="Sasakawa C."/>
            <person name="Ogasawara N."/>
            <person name="Yasunaga T."/>
            <person name="Kuhara S."/>
            <person name="Shiba T."/>
            <person name="Hattori M."/>
            <person name="Shinagawa H."/>
        </authorList>
    </citation>
    <scope>NUCLEOTIDE SEQUENCE [LARGE SCALE GENOMIC DNA]</scope>
    <source>
        <strain>O157:H7 / Sakai / RIMD 0509952 / EHEC</strain>
    </source>
</reference>
<organism>
    <name type="scientific">Escherichia coli O157:H7</name>
    <dbReference type="NCBI Taxonomy" id="83334"/>
    <lineage>
        <taxon>Bacteria</taxon>
        <taxon>Pseudomonadati</taxon>
        <taxon>Pseudomonadota</taxon>
        <taxon>Gammaproteobacteria</taxon>
        <taxon>Enterobacterales</taxon>
        <taxon>Enterobacteriaceae</taxon>
        <taxon>Escherichia</taxon>
    </lineage>
</organism>
<gene>
    <name type="primary">yoaE</name>
    <name type="ordered locus">Z2859</name>
    <name type="ordered locus">ECs2525</name>
</gene>
<keyword id="KW-0129">CBS domain</keyword>
<keyword id="KW-0997">Cell inner membrane</keyword>
<keyword id="KW-1003">Cell membrane</keyword>
<keyword id="KW-0472">Membrane</keyword>
<keyword id="KW-1185">Reference proteome</keyword>
<keyword id="KW-0677">Repeat</keyword>
<keyword id="KW-0812">Transmembrane</keyword>
<keyword id="KW-1133">Transmembrane helix</keyword>
<feature type="chain" id="PRO_0000088360" description="UPF0053 inner membrane protein YoaE">
    <location>
        <begin position="1"/>
        <end position="518"/>
    </location>
</feature>
<feature type="topological domain" description="Cytoplasmic" evidence="2">
    <location>
        <begin position="1"/>
        <end position="13"/>
    </location>
</feature>
<feature type="transmembrane region" description="Helical" evidence="2">
    <location>
        <begin position="14"/>
        <end position="34"/>
    </location>
</feature>
<feature type="topological domain" description="Periplasmic" evidence="2">
    <location>
        <begin position="35"/>
        <end position="48"/>
    </location>
</feature>
<feature type="transmembrane region" description="Helical" evidence="2">
    <location>
        <begin position="49"/>
        <end position="69"/>
    </location>
</feature>
<feature type="topological domain" description="Cytoplasmic" evidence="2">
    <location>
        <begin position="70"/>
        <end position="78"/>
    </location>
</feature>
<feature type="transmembrane region" description="Helical" evidence="2">
    <location>
        <begin position="79"/>
        <end position="99"/>
    </location>
</feature>
<feature type="topological domain" description="Periplasmic" evidence="2">
    <location>
        <begin position="100"/>
        <end position="124"/>
    </location>
</feature>
<feature type="transmembrane region" description="Helical" evidence="2">
    <location>
        <begin position="125"/>
        <end position="145"/>
    </location>
</feature>
<feature type="topological domain" description="Cytoplasmic" evidence="2">
    <location>
        <begin position="146"/>
        <end position="149"/>
    </location>
</feature>
<feature type="transmembrane region" description="Helical" evidence="2">
    <location>
        <begin position="150"/>
        <end position="170"/>
    </location>
</feature>
<feature type="topological domain" description="Periplasmic" evidence="2">
    <location>
        <begin position="171"/>
        <end position="184"/>
    </location>
</feature>
<feature type="transmembrane region" description="Helical" evidence="2">
    <location>
        <begin position="185"/>
        <end position="205"/>
    </location>
</feature>
<feature type="topological domain" description="Cytoplasmic" evidence="2">
    <location>
        <position position="206"/>
    </location>
</feature>
<feature type="transmembrane region" description="Helical" evidence="2">
    <location>
        <begin position="207"/>
        <end position="227"/>
    </location>
</feature>
<feature type="topological domain" description="Periplasmic" evidence="2">
    <location>
        <begin position="228"/>
        <end position="354"/>
    </location>
</feature>
<feature type="transmembrane region" description="Helical" evidence="2">
    <location>
        <begin position="355"/>
        <end position="375"/>
    </location>
</feature>
<feature type="topological domain" description="Cytoplasmic" evidence="2">
    <location>
        <begin position="376"/>
        <end position="518"/>
    </location>
</feature>
<feature type="domain" description="CBS 1" evidence="3">
    <location>
        <begin position="304"/>
        <end position="363"/>
    </location>
</feature>
<feature type="domain" description="CBS 2" evidence="3">
    <location>
        <begin position="367"/>
        <end position="427"/>
    </location>
</feature>
<dbReference type="EMBL" id="AE005174">
    <property type="protein sequence ID" value="AAG56805.1"/>
    <property type="molecule type" value="Genomic_DNA"/>
</dbReference>
<dbReference type="EMBL" id="BA000007">
    <property type="protein sequence ID" value="BAB35948.1"/>
    <property type="molecule type" value="Genomic_DNA"/>
</dbReference>
<dbReference type="PIR" id="E90944">
    <property type="entry name" value="E90944"/>
</dbReference>
<dbReference type="RefSeq" id="NP_310552.1">
    <property type="nucleotide sequence ID" value="NC_002695.1"/>
</dbReference>
<dbReference type="RefSeq" id="WP_000394983.1">
    <property type="nucleotide sequence ID" value="NZ_VOAI01000010.1"/>
</dbReference>
<dbReference type="SMR" id="P0AEC2"/>
<dbReference type="STRING" id="155864.Z2859"/>
<dbReference type="GeneID" id="914066"/>
<dbReference type="GeneID" id="93776065"/>
<dbReference type="KEGG" id="ece:Z2859"/>
<dbReference type="KEGG" id="ecs:ECs_2525"/>
<dbReference type="PATRIC" id="fig|386585.9.peg.2646"/>
<dbReference type="eggNOG" id="COG1253">
    <property type="taxonomic scope" value="Bacteria"/>
</dbReference>
<dbReference type="HOGENOM" id="CLU_015237_0_0_6"/>
<dbReference type="OMA" id="EFGVIQG"/>
<dbReference type="Proteomes" id="UP000000558">
    <property type="component" value="Chromosome"/>
</dbReference>
<dbReference type="Proteomes" id="UP000002519">
    <property type="component" value="Chromosome"/>
</dbReference>
<dbReference type="GO" id="GO:0005886">
    <property type="term" value="C:plasma membrane"/>
    <property type="evidence" value="ECO:0007669"/>
    <property type="project" value="UniProtKB-SubCell"/>
</dbReference>
<dbReference type="GO" id="GO:0050660">
    <property type="term" value="F:flavin adenine dinucleotide binding"/>
    <property type="evidence" value="ECO:0007669"/>
    <property type="project" value="InterPro"/>
</dbReference>
<dbReference type="CDD" id="cd04590">
    <property type="entry name" value="CBS_pair_CorC_HlyC_assoc"/>
    <property type="match status" value="1"/>
</dbReference>
<dbReference type="FunFam" id="3.10.580.10:FF:000008">
    <property type="entry name" value="Integral membrane protein TerC"/>
    <property type="match status" value="1"/>
</dbReference>
<dbReference type="FunFam" id="3.30.465.10:FF:000005">
    <property type="entry name" value="Integral membrane protein TerC"/>
    <property type="match status" value="1"/>
</dbReference>
<dbReference type="Gene3D" id="3.30.465.10">
    <property type="match status" value="1"/>
</dbReference>
<dbReference type="Gene3D" id="3.10.580.10">
    <property type="entry name" value="CBS-domain"/>
    <property type="match status" value="1"/>
</dbReference>
<dbReference type="InterPro" id="IPR000644">
    <property type="entry name" value="CBS_dom"/>
</dbReference>
<dbReference type="InterPro" id="IPR046342">
    <property type="entry name" value="CBS_dom_sf"/>
</dbReference>
<dbReference type="InterPro" id="IPR036318">
    <property type="entry name" value="FAD-bd_PCMH-like_sf"/>
</dbReference>
<dbReference type="InterPro" id="IPR016169">
    <property type="entry name" value="FAD-bd_PCMH_sub2"/>
</dbReference>
<dbReference type="InterPro" id="IPR005496">
    <property type="entry name" value="Integral_membrane_TerC"/>
</dbReference>
<dbReference type="InterPro" id="IPR044751">
    <property type="entry name" value="Ion_transp-like_CBS"/>
</dbReference>
<dbReference type="InterPro" id="IPR005170">
    <property type="entry name" value="Transptr-assoc_dom"/>
</dbReference>
<dbReference type="PANTHER" id="PTHR22777">
    <property type="entry name" value="HEMOLYSIN-RELATED"/>
    <property type="match status" value="1"/>
</dbReference>
<dbReference type="PANTHER" id="PTHR22777:SF15">
    <property type="entry name" value="UPF0053 INNER MEMBRANE PROTEIN YOAE"/>
    <property type="match status" value="1"/>
</dbReference>
<dbReference type="Pfam" id="PF03471">
    <property type="entry name" value="CorC_HlyC"/>
    <property type="match status" value="1"/>
</dbReference>
<dbReference type="Pfam" id="PF03741">
    <property type="entry name" value="TerC"/>
    <property type="match status" value="1"/>
</dbReference>
<dbReference type="SMART" id="SM01091">
    <property type="entry name" value="CorC_HlyC"/>
    <property type="match status" value="1"/>
</dbReference>
<dbReference type="SUPFAM" id="SSF54631">
    <property type="entry name" value="CBS-domain pair"/>
    <property type="match status" value="1"/>
</dbReference>
<dbReference type="SUPFAM" id="SSF56176">
    <property type="entry name" value="FAD-binding/transporter-associated domain-like"/>
    <property type="match status" value="1"/>
</dbReference>
<dbReference type="PROSITE" id="PS51371">
    <property type="entry name" value="CBS"/>
    <property type="match status" value="2"/>
</dbReference>
<sequence length="518" mass="56528">MEFLMDPSIWAGLLTLVVLEIVLGIDNLVFIAILADKLPPKQRDKARLLGLSLALIMRLGLLSLISWMVTLTKPLFTVMDFSFSGRDLIMLFGGIFLLFKATTELHERLENRDHDSGHGKGYASFWVVVTQIVILDAVFSLDAVITAVGMVNHLPVMMAAVVIAMAVMLLASKPLTRFVNQHPTVVVLCLSFLLMIGLSLVAEGFGFHIPKGYLYAAIGFSIIIEVFNQIARRNFIRHQSTLPLRARTADAILRLMGGKRQANVQHDADNPMPMPIPEGAFAEEERYMINGVLTLASRSLRGIMTPRGEISWVDANLGVDEIREQLLSSPHSLFPVCRGELDEIIGIVRAKELLVALEEGVDVAAIASASPAIIVPETLDPINLLGVLRRARGSFVIVTNEFGVVQGLVTPLDVLEAIAGEFPDADETPEIITDGDGWLVKGGTDLHALQQALDVEHLADDDDIATVAGLVISANGHIPRVGDVIDVGPLHITIIEANDYRVDLVRIVKEQPAHDEDE</sequence>